<proteinExistence type="inferred from homology"/>
<sequence length="471" mass="50910">MATGKILQITGVVIDAEFPADGLPQIYNALEIPLGEGRSSLICEVQQQLGDSVVRAVAMSTTDGLVRGMDVIDTGAPISVPVGPETLGRVFDVQGRPIDGEGAVGTTKTMPIHRPAPTFEEQSNRAELFETGIKVIDLIAPFTKGGKTGVFGGAGVGKTVIIQELISNIAKEQSGYSVFAGVGERSREGNDLIHEMKDSKIPGTDQTVFDKTVMVFGQMNEPPGARLRVALSALTMAEYFREEGRDVLLFVDNIFRFTQAGSEVSALLGRMPSQVGYQPTLGTEMGELQERITSTKTGSITSLQAVYVPADDYTDPAPATTFAHLDATISLERSISEKGIYPAVDPLASTSRILDPNIVGEEHYRVATEVQRMLQRYKDLQDIIAILGVEELSDDDKLTVSRARKLERFFSQPFGVAEVFTNIPGKYVAVGDTVKSFARVLAGEFDHIPESFFFMKGGIDDVVAAYDASKQ</sequence>
<organism>
    <name type="scientific">Herpetosiphon aurantiacus (strain ATCC 23779 / DSM 785 / 114-95)</name>
    <dbReference type="NCBI Taxonomy" id="316274"/>
    <lineage>
        <taxon>Bacteria</taxon>
        <taxon>Bacillati</taxon>
        <taxon>Chloroflexota</taxon>
        <taxon>Chloroflexia</taxon>
        <taxon>Herpetosiphonales</taxon>
        <taxon>Herpetosiphonaceae</taxon>
        <taxon>Herpetosiphon</taxon>
    </lineage>
</organism>
<gene>
    <name evidence="1" type="primary">atpD</name>
    <name type="ordered locus">Haur_4072</name>
</gene>
<accession>A9AVV4</accession>
<reference key="1">
    <citation type="journal article" date="2011" name="Stand. Genomic Sci.">
        <title>Complete genome sequence of the filamentous gliding predatory bacterium Herpetosiphon aurantiacus type strain (114-95(T)).</title>
        <authorList>
            <person name="Kiss H."/>
            <person name="Nett M."/>
            <person name="Domin N."/>
            <person name="Martin K."/>
            <person name="Maresca J.A."/>
            <person name="Copeland A."/>
            <person name="Lapidus A."/>
            <person name="Lucas S."/>
            <person name="Berry K.W."/>
            <person name="Glavina Del Rio T."/>
            <person name="Dalin E."/>
            <person name="Tice H."/>
            <person name="Pitluck S."/>
            <person name="Richardson P."/>
            <person name="Bruce D."/>
            <person name="Goodwin L."/>
            <person name="Han C."/>
            <person name="Detter J.C."/>
            <person name="Schmutz J."/>
            <person name="Brettin T."/>
            <person name="Land M."/>
            <person name="Hauser L."/>
            <person name="Kyrpides N.C."/>
            <person name="Ivanova N."/>
            <person name="Goeker M."/>
            <person name="Woyke T."/>
            <person name="Klenk H.P."/>
            <person name="Bryant D.A."/>
        </authorList>
    </citation>
    <scope>NUCLEOTIDE SEQUENCE [LARGE SCALE GENOMIC DNA]</scope>
    <source>
        <strain>ATCC 23779 / DSM 785 / 114-95</strain>
    </source>
</reference>
<protein>
    <recommendedName>
        <fullName evidence="1">ATP synthase subunit beta</fullName>
        <ecNumber evidence="1">7.1.2.2</ecNumber>
    </recommendedName>
    <alternativeName>
        <fullName evidence="1">ATP synthase F1 sector subunit beta</fullName>
    </alternativeName>
    <alternativeName>
        <fullName evidence="1">F-ATPase subunit beta</fullName>
    </alternativeName>
</protein>
<keyword id="KW-0066">ATP synthesis</keyword>
<keyword id="KW-0067">ATP-binding</keyword>
<keyword id="KW-1003">Cell membrane</keyword>
<keyword id="KW-0139">CF(1)</keyword>
<keyword id="KW-0375">Hydrogen ion transport</keyword>
<keyword id="KW-0406">Ion transport</keyword>
<keyword id="KW-0472">Membrane</keyword>
<keyword id="KW-0547">Nucleotide-binding</keyword>
<keyword id="KW-1278">Translocase</keyword>
<keyword id="KW-0813">Transport</keyword>
<comment type="function">
    <text evidence="1">Produces ATP from ADP in the presence of a proton gradient across the membrane. The catalytic sites are hosted primarily by the beta subunits.</text>
</comment>
<comment type="catalytic activity">
    <reaction evidence="1">
        <text>ATP + H2O + 4 H(+)(in) = ADP + phosphate + 5 H(+)(out)</text>
        <dbReference type="Rhea" id="RHEA:57720"/>
        <dbReference type="ChEBI" id="CHEBI:15377"/>
        <dbReference type="ChEBI" id="CHEBI:15378"/>
        <dbReference type="ChEBI" id="CHEBI:30616"/>
        <dbReference type="ChEBI" id="CHEBI:43474"/>
        <dbReference type="ChEBI" id="CHEBI:456216"/>
        <dbReference type="EC" id="7.1.2.2"/>
    </reaction>
</comment>
<comment type="subunit">
    <text evidence="1">F-type ATPases have 2 components, CF(1) - the catalytic core - and CF(0) - the membrane proton channel. CF(1) has five subunits: alpha(3), beta(3), gamma(1), delta(1), epsilon(1). CF(0) has three main subunits: a(1), b(2) and c(9-12). The alpha and beta chains form an alternating ring which encloses part of the gamma chain. CF(1) is attached to CF(0) by a central stalk formed by the gamma and epsilon chains, while a peripheral stalk is formed by the delta and b chains.</text>
</comment>
<comment type="subcellular location">
    <subcellularLocation>
        <location evidence="1">Cell membrane</location>
        <topology evidence="1">Peripheral membrane protein</topology>
    </subcellularLocation>
</comment>
<comment type="similarity">
    <text evidence="1">Belongs to the ATPase alpha/beta chains family.</text>
</comment>
<feature type="chain" id="PRO_1000143516" description="ATP synthase subunit beta">
    <location>
        <begin position="1"/>
        <end position="471"/>
    </location>
</feature>
<feature type="binding site" evidence="1">
    <location>
        <begin position="152"/>
        <end position="159"/>
    </location>
    <ligand>
        <name>ATP</name>
        <dbReference type="ChEBI" id="CHEBI:30616"/>
    </ligand>
</feature>
<evidence type="ECO:0000255" key="1">
    <source>
        <dbReference type="HAMAP-Rule" id="MF_01347"/>
    </source>
</evidence>
<dbReference type="EC" id="7.1.2.2" evidence="1"/>
<dbReference type="EMBL" id="CP000875">
    <property type="protein sequence ID" value="ABX06704.1"/>
    <property type="molecule type" value="Genomic_DNA"/>
</dbReference>
<dbReference type="SMR" id="A9AVV4"/>
<dbReference type="FunCoup" id="A9AVV4">
    <property type="interactions" value="370"/>
</dbReference>
<dbReference type="STRING" id="316274.Haur_4072"/>
<dbReference type="KEGG" id="hau:Haur_4072"/>
<dbReference type="eggNOG" id="COG0055">
    <property type="taxonomic scope" value="Bacteria"/>
</dbReference>
<dbReference type="HOGENOM" id="CLU_022398_0_2_0"/>
<dbReference type="InParanoid" id="A9AVV4"/>
<dbReference type="Proteomes" id="UP000000787">
    <property type="component" value="Chromosome"/>
</dbReference>
<dbReference type="GO" id="GO:0005886">
    <property type="term" value="C:plasma membrane"/>
    <property type="evidence" value="ECO:0007669"/>
    <property type="project" value="UniProtKB-SubCell"/>
</dbReference>
<dbReference type="GO" id="GO:0045259">
    <property type="term" value="C:proton-transporting ATP synthase complex"/>
    <property type="evidence" value="ECO:0007669"/>
    <property type="project" value="UniProtKB-KW"/>
</dbReference>
<dbReference type="GO" id="GO:0005524">
    <property type="term" value="F:ATP binding"/>
    <property type="evidence" value="ECO:0007669"/>
    <property type="project" value="UniProtKB-UniRule"/>
</dbReference>
<dbReference type="GO" id="GO:0016887">
    <property type="term" value="F:ATP hydrolysis activity"/>
    <property type="evidence" value="ECO:0007669"/>
    <property type="project" value="InterPro"/>
</dbReference>
<dbReference type="GO" id="GO:0046933">
    <property type="term" value="F:proton-transporting ATP synthase activity, rotational mechanism"/>
    <property type="evidence" value="ECO:0007669"/>
    <property type="project" value="UniProtKB-UniRule"/>
</dbReference>
<dbReference type="CDD" id="cd18110">
    <property type="entry name" value="ATP-synt_F1_beta_C"/>
    <property type="match status" value="1"/>
</dbReference>
<dbReference type="CDD" id="cd18115">
    <property type="entry name" value="ATP-synt_F1_beta_N"/>
    <property type="match status" value="1"/>
</dbReference>
<dbReference type="CDD" id="cd01133">
    <property type="entry name" value="F1-ATPase_beta_CD"/>
    <property type="match status" value="1"/>
</dbReference>
<dbReference type="FunFam" id="1.10.1140.10:FF:000001">
    <property type="entry name" value="ATP synthase subunit beta"/>
    <property type="match status" value="1"/>
</dbReference>
<dbReference type="FunFam" id="2.40.10.170:FF:000005">
    <property type="entry name" value="ATP synthase subunit beta"/>
    <property type="match status" value="1"/>
</dbReference>
<dbReference type="FunFam" id="3.40.50.300:FF:000004">
    <property type="entry name" value="ATP synthase subunit beta"/>
    <property type="match status" value="1"/>
</dbReference>
<dbReference type="Gene3D" id="2.40.10.170">
    <property type="match status" value="1"/>
</dbReference>
<dbReference type="Gene3D" id="1.10.1140.10">
    <property type="entry name" value="Bovine Mitochondrial F1-atpase, Atp Synthase Beta Chain, Chain D, domain 3"/>
    <property type="match status" value="1"/>
</dbReference>
<dbReference type="Gene3D" id="3.40.50.300">
    <property type="entry name" value="P-loop containing nucleotide triphosphate hydrolases"/>
    <property type="match status" value="1"/>
</dbReference>
<dbReference type="HAMAP" id="MF_01347">
    <property type="entry name" value="ATP_synth_beta_bact"/>
    <property type="match status" value="1"/>
</dbReference>
<dbReference type="InterPro" id="IPR003593">
    <property type="entry name" value="AAA+_ATPase"/>
</dbReference>
<dbReference type="InterPro" id="IPR055190">
    <property type="entry name" value="ATP-synt_VA_C"/>
</dbReference>
<dbReference type="InterPro" id="IPR005722">
    <property type="entry name" value="ATP_synth_F1_bsu"/>
</dbReference>
<dbReference type="InterPro" id="IPR020003">
    <property type="entry name" value="ATPase_a/bsu_AS"/>
</dbReference>
<dbReference type="InterPro" id="IPR050053">
    <property type="entry name" value="ATPase_alpha/beta_chains"/>
</dbReference>
<dbReference type="InterPro" id="IPR004100">
    <property type="entry name" value="ATPase_F1/V1/A1_a/bsu_N"/>
</dbReference>
<dbReference type="InterPro" id="IPR036121">
    <property type="entry name" value="ATPase_F1/V1/A1_a/bsu_N_sf"/>
</dbReference>
<dbReference type="InterPro" id="IPR000194">
    <property type="entry name" value="ATPase_F1/V1/A1_a/bsu_nucl-bd"/>
</dbReference>
<dbReference type="InterPro" id="IPR024034">
    <property type="entry name" value="ATPase_F1/V1_b/a_C"/>
</dbReference>
<dbReference type="InterPro" id="IPR027417">
    <property type="entry name" value="P-loop_NTPase"/>
</dbReference>
<dbReference type="NCBIfam" id="TIGR01039">
    <property type="entry name" value="atpD"/>
    <property type="match status" value="1"/>
</dbReference>
<dbReference type="PANTHER" id="PTHR15184">
    <property type="entry name" value="ATP SYNTHASE"/>
    <property type="match status" value="1"/>
</dbReference>
<dbReference type="PANTHER" id="PTHR15184:SF71">
    <property type="entry name" value="ATP SYNTHASE SUBUNIT BETA, MITOCHONDRIAL"/>
    <property type="match status" value="1"/>
</dbReference>
<dbReference type="Pfam" id="PF00006">
    <property type="entry name" value="ATP-synt_ab"/>
    <property type="match status" value="1"/>
</dbReference>
<dbReference type="Pfam" id="PF02874">
    <property type="entry name" value="ATP-synt_ab_N"/>
    <property type="match status" value="1"/>
</dbReference>
<dbReference type="Pfam" id="PF22919">
    <property type="entry name" value="ATP-synt_VA_C"/>
    <property type="match status" value="1"/>
</dbReference>
<dbReference type="SMART" id="SM00382">
    <property type="entry name" value="AAA"/>
    <property type="match status" value="1"/>
</dbReference>
<dbReference type="SUPFAM" id="SSF47917">
    <property type="entry name" value="C-terminal domain of alpha and beta subunits of F1 ATP synthase"/>
    <property type="match status" value="1"/>
</dbReference>
<dbReference type="SUPFAM" id="SSF50615">
    <property type="entry name" value="N-terminal domain of alpha and beta subunits of F1 ATP synthase"/>
    <property type="match status" value="1"/>
</dbReference>
<dbReference type="SUPFAM" id="SSF52540">
    <property type="entry name" value="P-loop containing nucleoside triphosphate hydrolases"/>
    <property type="match status" value="1"/>
</dbReference>
<dbReference type="PROSITE" id="PS00152">
    <property type="entry name" value="ATPASE_ALPHA_BETA"/>
    <property type="match status" value="1"/>
</dbReference>
<name>ATPB_HERA2</name>